<protein>
    <recommendedName>
        <fullName evidence="1">Carbamoyl phosphate synthase large chain</fullName>
        <ecNumber evidence="1">6.3.4.16</ecNumber>
        <ecNumber evidence="1">6.3.5.5</ecNumber>
    </recommendedName>
    <alternativeName>
        <fullName evidence="1">Carbamoyl phosphate synthetase ammonia chain</fullName>
    </alternativeName>
</protein>
<gene>
    <name evidence="1" type="primary">carB</name>
    <name type="ordered locus">Rv1384</name>
    <name type="ORF">MTCY02B12.18</name>
    <name type="ORF">MTCY21B4.01</name>
</gene>
<organism>
    <name type="scientific">Mycobacterium tuberculosis (strain ATCC 25618 / H37Rv)</name>
    <dbReference type="NCBI Taxonomy" id="83332"/>
    <lineage>
        <taxon>Bacteria</taxon>
        <taxon>Bacillati</taxon>
        <taxon>Actinomycetota</taxon>
        <taxon>Actinomycetes</taxon>
        <taxon>Mycobacteriales</taxon>
        <taxon>Mycobacteriaceae</taxon>
        <taxon>Mycobacterium</taxon>
        <taxon>Mycobacterium tuberculosis complex</taxon>
    </lineage>
</organism>
<evidence type="ECO:0000255" key="1">
    <source>
        <dbReference type="HAMAP-Rule" id="MF_01210"/>
    </source>
</evidence>
<name>CARB_MYCTU</name>
<sequence>MPRRTDLHHVLVIGSGPIVIGQACEFDYSGTQACRVLRAEGLQVSLVNSNPATIMTDPEFADHTYVEPITPAFVERVIAQQAERGNKIDALLATLGGQTALNTAVALYESGVLEKYGVELIGADFDAIQRGEDRQRFKDIVAKAGGESARSRVCFTMAEVRETVAELGLPVVVRPSFTMGGLGSGIAYSTDEVDRMAGAGLAASPSANVLIEESIYGWKEFELELMRDGHDNVVVVCSIENVDPMGVHTGDSVTVAPAMTLTDREYQRMRDLGIAILREVGVDTGGCNIQFAVNPRDGRLIVIEMNPRVSRSSALASKATGFPIAKIAAKLAIGYTLDEIVNDITGETPACFEPTLDYVVVKAPRFAFEKFPGADPTLTTTMKSVGEAMSLGRNFVEALGKVMRSLETTRAGFWTAPDPDGGIEEALTRLRTPAEGRLYDIELALRLGATVERVAEASGVDPWFIAQINELVNLRNELVAAPVLNAELLRRAKHSGLSDHQIASLRPELAGEAGVRSLRVRLGIHPVYKTVDTCAAEFEAQTPYHYSSYELDPAAETEVAPQTERPKVLILGSGPNRIGQGIEFDYSCVHAATTLSQAGFETVMVNCNPETVSTDYDTADRLYFEPLTFEDVLEVYHAEMESGSGGPGVAGVIVQLGGQTPLGLAHRLADAGVPIVGTPPEAIDLAEDRGAFGDLLSAAGLPAPKYGTATTFAQARRIAEEIGYPVLVRPSYVLGGRGMEIVYDEETLQGYITRATQLSPEHPVLVDRFLEDAVEIDVDALCDGAEVYIGGIMEHIEEAGIHSGDSACALPPVTLGRSDIAKVRKATEAIAHGIGVVGLLNVQYALKDDVLYVLEANPRASRTVPFVSKATAVPLAKACARIMLGATIAQLRAEGLLAVTGDGAHAARNAPIAVKEAVLPFHRFRRADGAAIDSLLGPEMKSTGEVMGIDRDFGSAFAKSQTAAYGSLPAQGTVFVSVANRDKRSLVFPVKRLADLGFRVLATEGTAEMLRRNGIPCDDVRKHFEPAQPGRPTMSAVDAIRAGEVNMVINTPYGNSGPRIDGYEIRSAAVAGNIPCITTVQGASAAVQGIEAGIRGDIGVRSLQELHRVIGGVER</sequence>
<comment type="function">
    <text evidence="1">Large subunit of the glutamine-dependent carbamoyl phosphate synthetase (CPSase). CPSase catalyzes the formation of carbamoyl phosphate from the ammonia moiety of glutamine, carbonate, and phosphate donated by ATP, constituting the first step of 2 biosynthetic pathways, one leading to arginine and/or urea and the other to pyrimidine nucleotides. The large subunit (synthetase) binds the substrates ammonia (free or transferred from glutamine from the small subunit), hydrogencarbonate and ATP and carries out an ATP-coupled ligase reaction, activating hydrogencarbonate by forming carboxy phosphate which reacts with ammonia to form carbamoyl phosphate.</text>
</comment>
<comment type="catalytic activity">
    <reaction evidence="1">
        <text>hydrogencarbonate + L-glutamine + 2 ATP + H2O = carbamoyl phosphate + L-glutamate + 2 ADP + phosphate + 2 H(+)</text>
        <dbReference type="Rhea" id="RHEA:18633"/>
        <dbReference type="ChEBI" id="CHEBI:15377"/>
        <dbReference type="ChEBI" id="CHEBI:15378"/>
        <dbReference type="ChEBI" id="CHEBI:17544"/>
        <dbReference type="ChEBI" id="CHEBI:29985"/>
        <dbReference type="ChEBI" id="CHEBI:30616"/>
        <dbReference type="ChEBI" id="CHEBI:43474"/>
        <dbReference type="ChEBI" id="CHEBI:58228"/>
        <dbReference type="ChEBI" id="CHEBI:58359"/>
        <dbReference type="ChEBI" id="CHEBI:456216"/>
        <dbReference type="EC" id="6.3.5.5"/>
    </reaction>
</comment>
<comment type="catalytic activity">
    <molecule>Carbamoyl phosphate synthase large chain</molecule>
    <reaction evidence="1">
        <text>hydrogencarbonate + NH4(+) + 2 ATP = carbamoyl phosphate + 2 ADP + phosphate + 2 H(+)</text>
        <dbReference type="Rhea" id="RHEA:18029"/>
        <dbReference type="ChEBI" id="CHEBI:15378"/>
        <dbReference type="ChEBI" id="CHEBI:17544"/>
        <dbReference type="ChEBI" id="CHEBI:28938"/>
        <dbReference type="ChEBI" id="CHEBI:30616"/>
        <dbReference type="ChEBI" id="CHEBI:43474"/>
        <dbReference type="ChEBI" id="CHEBI:58228"/>
        <dbReference type="ChEBI" id="CHEBI:456216"/>
        <dbReference type="EC" id="6.3.4.16"/>
    </reaction>
</comment>
<comment type="cofactor">
    <cofactor evidence="1">
        <name>Mg(2+)</name>
        <dbReference type="ChEBI" id="CHEBI:18420"/>
    </cofactor>
    <cofactor evidence="1">
        <name>Mn(2+)</name>
        <dbReference type="ChEBI" id="CHEBI:29035"/>
    </cofactor>
    <text evidence="1">Binds 4 Mg(2+) or Mn(2+) ions per subunit.</text>
</comment>
<comment type="pathway">
    <text evidence="1">Amino-acid biosynthesis; L-arginine biosynthesis; carbamoyl phosphate from bicarbonate: step 1/1.</text>
</comment>
<comment type="pathway">
    <text evidence="1">Pyrimidine metabolism; UMP biosynthesis via de novo pathway; (S)-dihydroorotate from bicarbonate: step 1/3.</text>
</comment>
<comment type="subunit">
    <text evidence="1">Composed of two chains; the small (or glutamine) chain promotes the hydrolysis of glutamine to ammonia, which is used by the large (or ammonia) chain to synthesize carbamoyl phosphate. Tetramer of heterodimers (alpha,beta)4.</text>
</comment>
<comment type="domain">
    <text evidence="1">The large subunit is composed of 2 ATP-grasp domains that are involved in binding the 2 ATP molecules needed for carbamoyl phosphate synthesis. The N-terminal ATP-grasp domain (referred to as the carboxyphosphate synthetic component) catalyzes the ATP-dependent phosphorylation of hydrogencarbonate to carboxyphosphate and the subsequent nucleophilic attack by ammonia to form a carbamate intermediate. The C-terminal ATP-grasp domain (referred to as the carbamoyl phosphate synthetic component) then catalyzes the phosphorylation of carbamate with the second ATP to form the end product carbamoyl phosphate. The reactive and unstable enzyme intermediates are sequentially channeled from one active site to the next through the interior of the protein over a distance of at least 96 A.</text>
</comment>
<comment type="similarity">
    <text evidence="1">Belongs to the CarB family.</text>
</comment>
<dbReference type="EC" id="6.3.4.16" evidence="1"/>
<dbReference type="EC" id="6.3.5.5" evidence="1"/>
<dbReference type="EMBL" id="AL123456">
    <property type="protein sequence ID" value="CCP44143.1"/>
    <property type="molecule type" value="Genomic_DNA"/>
</dbReference>
<dbReference type="PIR" id="A70990">
    <property type="entry name" value="A70990"/>
</dbReference>
<dbReference type="RefSeq" id="WP_003898855.1">
    <property type="nucleotide sequence ID" value="NZ_NVQJ01000050.1"/>
</dbReference>
<dbReference type="RefSeq" id="YP_177804.1">
    <property type="nucleotide sequence ID" value="NC_000962.3"/>
</dbReference>
<dbReference type="SMR" id="P9WPK3"/>
<dbReference type="FunCoup" id="P9WPK3">
    <property type="interactions" value="508"/>
</dbReference>
<dbReference type="STRING" id="83332.Rv1384"/>
<dbReference type="PaxDb" id="83332-Rv1384"/>
<dbReference type="GeneID" id="886253"/>
<dbReference type="KEGG" id="mtu:Rv1384"/>
<dbReference type="KEGG" id="mtv:RVBD_1384"/>
<dbReference type="TubercuList" id="Rv1384"/>
<dbReference type="eggNOG" id="COG0458">
    <property type="taxonomic scope" value="Bacteria"/>
</dbReference>
<dbReference type="InParanoid" id="P9WPK3"/>
<dbReference type="OrthoDB" id="9804197at2"/>
<dbReference type="PhylomeDB" id="P9WPK3"/>
<dbReference type="UniPathway" id="UPA00068">
    <property type="reaction ID" value="UER00171"/>
</dbReference>
<dbReference type="UniPathway" id="UPA00070">
    <property type="reaction ID" value="UER00115"/>
</dbReference>
<dbReference type="Proteomes" id="UP000001584">
    <property type="component" value="Chromosome"/>
</dbReference>
<dbReference type="GO" id="GO:0005737">
    <property type="term" value="C:cytoplasm"/>
    <property type="evidence" value="ECO:0000318"/>
    <property type="project" value="GO_Central"/>
</dbReference>
<dbReference type="GO" id="GO:0005886">
    <property type="term" value="C:plasma membrane"/>
    <property type="evidence" value="ECO:0007005"/>
    <property type="project" value="MTBBASE"/>
</dbReference>
<dbReference type="GO" id="GO:0005524">
    <property type="term" value="F:ATP binding"/>
    <property type="evidence" value="ECO:0007669"/>
    <property type="project" value="UniProtKB-UniRule"/>
</dbReference>
<dbReference type="GO" id="GO:0004087">
    <property type="term" value="F:carbamoyl-phosphate synthase (ammonia) activity"/>
    <property type="evidence" value="ECO:0007669"/>
    <property type="project" value="RHEA"/>
</dbReference>
<dbReference type="GO" id="GO:0004088">
    <property type="term" value="F:carbamoyl-phosphate synthase (glutamine-hydrolyzing) activity"/>
    <property type="evidence" value="ECO:0007669"/>
    <property type="project" value="UniProtKB-UniRule"/>
</dbReference>
<dbReference type="GO" id="GO:0046872">
    <property type="term" value="F:metal ion binding"/>
    <property type="evidence" value="ECO:0007669"/>
    <property type="project" value="UniProtKB-KW"/>
</dbReference>
<dbReference type="GO" id="GO:0044205">
    <property type="term" value="P:'de novo' UMP biosynthetic process"/>
    <property type="evidence" value="ECO:0007669"/>
    <property type="project" value="UniProtKB-UniRule"/>
</dbReference>
<dbReference type="GO" id="GO:0006541">
    <property type="term" value="P:glutamine metabolic process"/>
    <property type="evidence" value="ECO:0000318"/>
    <property type="project" value="GO_Central"/>
</dbReference>
<dbReference type="GO" id="GO:0006526">
    <property type="term" value="P:L-arginine biosynthetic process"/>
    <property type="evidence" value="ECO:0007669"/>
    <property type="project" value="UniProtKB-UniRule"/>
</dbReference>
<dbReference type="CDD" id="cd01424">
    <property type="entry name" value="MGS_CPS_II"/>
    <property type="match status" value="1"/>
</dbReference>
<dbReference type="FunFam" id="1.10.1030.10:FF:000002">
    <property type="entry name" value="Carbamoyl-phosphate synthase large chain"/>
    <property type="match status" value="1"/>
</dbReference>
<dbReference type="FunFam" id="3.30.1490.20:FF:000001">
    <property type="entry name" value="Carbamoyl-phosphate synthase large chain"/>
    <property type="match status" value="1"/>
</dbReference>
<dbReference type="FunFam" id="3.30.470.20:FF:000007">
    <property type="entry name" value="Carbamoyl-phosphate synthase large chain"/>
    <property type="match status" value="1"/>
</dbReference>
<dbReference type="FunFam" id="3.30.470.20:FF:000014">
    <property type="entry name" value="Carbamoyl-phosphate synthase large chain"/>
    <property type="match status" value="1"/>
</dbReference>
<dbReference type="FunFam" id="3.40.50.1380:FF:000007">
    <property type="entry name" value="Carbamoyl-phosphate synthase large chain"/>
    <property type="match status" value="1"/>
</dbReference>
<dbReference type="FunFam" id="3.40.50.20:FF:000001">
    <property type="entry name" value="Carbamoyl-phosphate synthase large chain"/>
    <property type="match status" value="2"/>
</dbReference>
<dbReference type="Gene3D" id="3.40.50.20">
    <property type="match status" value="2"/>
</dbReference>
<dbReference type="Gene3D" id="3.30.1490.20">
    <property type="entry name" value="ATP-grasp fold, A domain"/>
    <property type="match status" value="1"/>
</dbReference>
<dbReference type="Gene3D" id="3.30.470.20">
    <property type="entry name" value="ATP-grasp fold, B domain"/>
    <property type="match status" value="2"/>
</dbReference>
<dbReference type="Gene3D" id="1.10.1030.10">
    <property type="entry name" value="Carbamoyl-phosphate synthetase, large subunit oligomerisation domain"/>
    <property type="match status" value="1"/>
</dbReference>
<dbReference type="Gene3D" id="3.40.50.1380">
    <property type="entry name" value="Methylglyoxal synthase-like domain"/>
    <property type="match status" value="1"/>
</dbReference>
<dbReference type="HAMAP" id="MF_01210_B">
    <property type="entry name" value="CPSase_L_chain_B"/>
    <property type="match status" value="1"/>
</dbReference>
<dbReference type="InterPro" id="IPR011761">
    <property type="entry name" value="ATP-grasp"/>
</dbReference>
<dbReference type="InterPro" id="IPR013815">
    <property type="entry name" value="ATP_grasp_subdomain_1"/>
</dbReference>
<dbReference type="InterPro" id="IPR006275">
    <property type="entry name" value="CarbamoylP_synth_lsu"/>
</dbReference>
<dbReference type="InterPro" id="IPR005480">
    <property type="entry name" value="CarbamoylP_synth_lsu_oligo"/>
</dbReference>
<dbReference type="InterPro" id="IPR036897">
    <property type="entry name" value="CarbamoylP_synth_lsu_oligo_sf"/>
</dbReference>
<dbReference type="InterPro" id="IPR005479">
    <property type="entry name" value="CbamoylP_synth_lsu-like_ATP-bd"/>
</dbReference>
<dbReference type="InterPro" id="IPR005483">
    <property type="entry name" value="CbamoylP_synth_lsu_CPSase_dom"/>
</dbReference>
<dbReference type="InterPro" id="IPR011607">
    <property type="entry name" value="MGS-like_dom"/>
</dbReference>
<dbReference type="InterPro" id="IPR036914">
    <property type="entry name" value="MGS-like_dom_sf"/>
</dbReference>
<dbReference type="InterPro" id="IPR033937">
    <property type="entry name" value="MGS_CPS_CarB"/>
</dbReference>
<dbReference type="InterPro" id="IPR016185">
    <property type="entry name" value="PreATP-grasp_dom_sf"/>
</dbReference>
<dbReference type="NCBIfam" id="TIGR01369">
    <property type="entry name" value="CPSaseII_lrg"/>
    <property type="match status" value="1"/>
</dbReference>
<dbReference type="NCBIfam" id="NF003671">
    <property type="entry name" value="PRK05294.1"/>
    <property type="match status" value="1"/>
</dbReference>
<dbReference type="NCBIfam" id="NF009455">
    <property type="entry name" value="PRK12815.1"/>
    <property type="match status" value="1"/>
</dbReference>
<dbReference type="PANTHER" id="PTHR11405:SF53">
    <property type="entry name" value="CARBAMOYL-PHOSPHATE SYNTHASE [AMMONIA], MITOCHONDRIAL"/>
    <property type="match status" value="1"/>
</dbReference>
<dbReference type="PANTHER" id="PTHR11405">
    <property type="entry name" value="CARBAMOYLTRANSFERASE FAMILY MEMBER"/>
    <property type="match status" value="1"/>
</dbReference>
<dbReference type="Pfam" id="PF02786">
    <property type="entry name" value="CPSase_L_D2"/>
    <property type="match status" value="2"/>
</dbReference>
<dbReference type="Pfam" id="PF02787">
    <property type="entry name" value="CPSase_L_D3"/>
    <property type="match status" value="1"/>
</dbReference>
<dbReference type="Pfam" id="PF02142">
    <property type="entry name" value="MGS"/>
    <property type="match status" value="1"/>
</dbReference>
<dbReference type="PRINTS" id="PR00098">
    <property type="entry name" value="CPSASE"/>
</dbReference>
<dbReference type="SMART" id="SM01096">
    <property type="entry name" value="CPSase_L_D3"/>
    <property type="match status" value="1"/>
</dbReference>
<dbReference type="SMART" id="SM00851">
    <property type="entry name" value="MGS"/>
    <property type="match status" value="1"/>
</dbReference>
<dbReference type="SUPFAM" id="SSF48108">
    <property type="entry name" value="Carbamoyl phosphate synthetase, large subunit connection domain"/>
    <property type="match status" value="1"/>
</dbReference>
<dbReference type="SUPFAM" id="SSF56059">
    <property type="entry name" value="Glutathione synthetase ATP-binding domain-like"/>
    <property type="match status" value="2"/>
</dbReference>
<dbReference type="SUPFAM" id="SSF52335">
    <property type="entry name" value="Methylglyoxal synthase-like"/>
    <property type="match status" value="1"/>
</dbReference>
<dbReference type="SUPFAM" id="SSF52440">
    <property type="entry name" value="PreATP-grasp domain"/>
    <property type="match status" value="2"/>
</dbReference>
<dbReference type="PROSITE" id="PS50975">
    <property type="entry name" value="ATP_GRASP"/>
    <property type="match status" value="2"/>
</dbReference>
<dbReference type="PROSITE" id="PS00866">
    <property type="entry name" value="CPSASE_1"/>
    <property type="match status" value="1"/>
</dbReference>
<dbReference type="PROSITE" id="PS00867">
    <property type="entry name" value="CPSASE_2"/>
    <property type="match status" value="2"/>
</dbReference>
<dbReference type="PROSITE" id="PS51855">
    <property type="entry name" value="MGS"/>
    <property type="match status" value="1"/>
</dbReference>
<accession>P9WPK3</accession>
<accession>L0T9H0</accession>
<accession>P57689</accession>
<keyword id="KW-0028">Amino-acid biosynthesis</keyword>
<keyword id="KW-0055">Arginine biosynthesis</keyword>
<keyword id="KW-0067">ATP-binding</keyword>
<keyword id="KW-0436">Ligase</keyword>
<keyword id="KW-0460">Magnesium</keyword>
<keyword id="KW-0464">Manganese</keyword>
<keyword id="KW-0479">Metal-binding</keyword>
<keyword id="KW-0547">Nucleotide-binding</keyword>
<keyword id="KW-0665">Pyrimidine biosynthesis</keyword>
<keyword id="KW-1185">Reference proteome</keyword>
<keyword id="KW-0677">Repeat</keyword>
<proteinExistence type="evidence at protein level"/>
<feature type="chain" id="PRO_0000145023" description="Carbamoyl phosphate synthase large chain">
    <location>
        <begin position="1"/>
        <end position="1115"/>
    </location>
</feature>
<feature type="domain" description="ATP-grasp 1" evidence="1">
    <location>
        <begin position="138"/>
        <end position="333"/>
    </location>
</feature>
<feature type="domain" description="ATP-grasp 2" evidence="1">
    <location>
        <begin position="693"/>
        <end position="884"/>
    </location>
</feature>
<feature type="domain" description="MGS-like" evidence="1">
    <location>
        <begin position="966"/>
        <end position="1113"/>
    </location>
</feature>
<feature type="region of interest" description="Carboxyphosphate synthetic domain" evidence="1">
    <location>
        <begin position="1"/>
        <end position="407"/>
    </location>
</feature>
<feature type="region of interest" description="Oligomerization domain" evidence="1">
    <location>
        <begin position="408"/>
        <end position="559"/>
    </location>
</feature>
<feature type="region of interest" description="Carbamoyl phosphate synthetic domain" evidence="1">
    <location>
        <begin position="560"/>
        <end position="965"/>
    </location>
</feature>
<feature type="region of interest" description="Allosteric domain" evidence="1">
    <location>
        <begin position="966"/>
        <end position="1115"/>
    </location>
</feature>
<feature type="binding site" evidence="1">
    <location>
        <position position="134"/>
    </location>
    <ligand>
        <name>ATP</name>
        <dbReference type="ChEBI" id="CHEBI:30616"/>
        <label>1</label>
    </ligand>
</feature>
<feature type="binding site" evidence="1">
    <location>
        <position position="174"/>
    </location>
    <ligand>
        <name>ATP</name>
        <dbReference type="ChEBI" id="CHEBI:30616"/>
        <label>1</label>
    </ligand>
</feature>
<feature type="binding site" evidence="1">
    <location>
        <position position="180"/>
    </location>
    <ligand>
        <name>ATP</name>
        <dbReference type="ChEBI" id="CHEBI:30616"/>
        <label>1</label>
    </ligand>
</feature>
<feature type="binding site" evidence="1">
    <location>
        <position position="181"/>
    </location>
    <ligand>
        <name>ATP</name>
        <dbReference type="ChEBI" id="CHEBI:30616"/>
        <label>1</label>
    </ligand>
</feature>
<feature type="binding site" evidence="1">
    <location>
        <position position="213"/>
    </location>
    <ligand>
        <name>ATP</name>
        <dbReference type="ChEBI" id="CHEBI:30616"/>
        <label>1</label>
    </ligand>
</feature>
<feature type="binding site" evidence="1">
    <location>
        <position position="215"/>
    </location>
    <ligand>
        <name>ATP</name>
        <dbReference type="ChEBI" id="CHEBI:30616"/>
        <label>1</label>
    </ligand>
</feature>
<feature type="binding site" evidence="1">
    <location>
        <position position="220"/>
    </location>
    <ligand>
        <name>ATP</name>
        <dbReference type="ChEBI" id="CHEBI:30616"/>
        <label>1</label>
    </ligand>
</feature>
<feature type="binding site" evidence="1">
    <location>
        <position position="246"/>
    </location>
    <ligand>
        <name>ATP</name>
        <dbReference type="ChEBI" id="CHEBI:30616"/>
        <label>1</label>
    </ligand>
</feature>
<feature type="binding site" evidence="1">
    <location>
        <position position="247"/>
    </location>
    <ligand>
        <name>ATP</name>
        <dbReference type="ChEBI" id="CHEBI:30616"/>
        <label>1</label>
    </ligand>
</feature>
<feature type="binding site" evidence="1">
    <location>
        <position position="248"/>
    </location>
    <ligand>
        <name>ATP</name>
        <dbReference type="ChEBI" id="CHEBI:30616"/>
        <label>1</label>
    </ligand>
</feature>
<feature type="binding site" evidence="1">
    <location>
        <position position="290"/>
    </location>
    <ligand>
        <name>ATP</name>
        <dbReference type="ChEBI" id="CHEBI:30616"/>
        <label>1</label>
    </ligand>
</feature>
<feature type="binding site" evidence="1">
    <location>
        <position position="290"/>
    </location>
    <ligand>
        <name>Mg(2+)</name>
        <dbReference type="ChEBI" id="CHEBI:18420"/>
        <label>1</label>
    </ligand>
</feature>
<feature type="binding site" evidence="1">
    <location>
        <position position="290"/>
    </location>
    <ligand>
        <name>Mn(2+)</name>
        <dbReference type="ChEBI" id="CHEBI:29035"/>
        <label>1</label>
    </ligand>
</feature>
<feature type="binding site" evidence="1">
    <location>
        <position position="304"/>
    </location>
    <ligand>
        <name>ATP</name>
        <dbReference type="ChEBI" id="CHEBI:30616"/>
        <label>1</label>
    </ligand>
</feature>
<feature type="binding site" evidence="1">
    <location>
        <position position="304"/>
    </location>
    <ligand>
        <name>Mg(2+)</name>
        <dbReference type="ChEBI" id="CHEBI:18420"/>
        <label>1</label>
    </ligand>
</feature>
<feature type="binding site" evidence="1">
    <location>
        <position position="304"/>
    </location>
    <ligand>
        <name>Mg(2+)</name>
        <dbReference type="ChEBI" id="CHEBI:18420"/>
        <label>2</label>
    </ligand>
</feature>
<feature type="binding site" evidence="1">
    <location>
        <position position="304"/>
    </location>
    <ligand>
        <name>Mn(2+)</name>
        <dbReference type="ChEBI" id="CHEBI:29035"/>
        <label>1</label>
    </ligand>
</feature>
<feature type="binding site" evidence="1">
    <location>
        <position position="304"/>
    </location>
    <ligand>
        <name>Mn(2+)</name>
        <dbReference type="ChEBI" id="CHEBI:29035"/>
        <label>2</label>
    </ligand>
</feature>
<feature type="binding site" evidence="1">
    <location>
        <position position="306"/>
    </location>
    <ligand>
        <name>Mg(2+)</name>
        <dbReference type="ChEBI" id="CHEBI:18420"/>
        <label>2</label>
    </ligand>
</feature>
<feature type="binding site" evidence="1">
    <location>
        <position position="306"/>
    </location>
    <ligand>
        <name>Mn(2+)</name>
        <dbReference type="ChEBI" id="CHEBI:29035"/>
        <label>2</label>
    </ligand>
</feature>
<feature type="binding site" evidence="1">
    <location>
        <position position="729"/>
    </location>
    <ligand>
        <name>ATP</name>
        <dbReference type="ChEBI" id="CHEBI:30616"/>
        <label>2</label>
    </ligand>
</feature>
<feature type="binding site" evidence="1">
    <location>
        <position position="768"/>
    </location>
    <ligand>
        <name>ATP</name>
        <dbReference type="ChEBI" id="CHEBI:30616"/>
        <label>2</label>
    </ligand>
</feature>
<feature type="binding site" evidence="1">
    <location>
        <position position="770"/>
    </location>
    <ligand>
        <name>ATP</name>
        <dbReference type="ChEBI" id="CHEBI:30616"/>
        <label>2</label>
    </ligand>
</feature>
<feature type="binding site" evidence="1">
    <location>
        <position position="775"/>
    </location>
    <ligand>
        <name>ATP</name>
        <dbReference type="ChEBI" id="CHEBI:30616"/>
        <label>2</label>
    </ligand>
</feature>
<feature type="binding site" evidence="1">
    <location>
        <position position="800"/>
    </location>
    <ligand>
        <name>ATP</name>
        <dbReference type="ChEBI" id="CHEBI:30616"/>
        <label>2</label>
    </ligand>
</feature>
<feature type="binding site" evidence="1">
    <location>
        <position position="801"/>
    </location>
    <ligand>
        <name>ATP</name>
        <dbReference type="ChEBI" id="CHEBI:30616"/>
        <label>2</label>
    </ligand>
</feature>
<feature type="binding site" evidence="1">
    <location>
        <position position="802"/>
    </location>
    <ligand>
        <name>ATP</name>
        <dbReference type="ChEBI" id="CHEBI:30616"/>
        <label>2</label>
    </ligand>
</feature>
<feature type="binding site" evidence="1">
    <location>
        <position position="803"/>
    </location>
    <ligand>
        <name>ATP</name>
        <dbReference type="ChEBI" id="CHEBI:30616"/>
        <label>2</label>
    </ligand>
</feature>
<feature type="binding site" evidence="1">
    <location>
        <position position="843"/>
    </location>
    <ligand>
        <name>ATP</name>
        <dbReference type="ChEBI" id="CHEBI:30616"/>
        <label>2</label>
    </ligand>
</feature>
<feature type="binding site" evidence="1">
    <location>
        <position position="843"/>
    </location>
    <ligand>
        <name>Mg(2+)</name>
        <dbReference type="ChEBI" id="CHEBI:18420"/>
        <label>3</label>
    </ligand>
</feature>
<feature type="binding site" evidence="1">
    <location>
        <position position="843"/>
    </location>
    <ligand>
        <name>Mn(2+)</name>
        <dbReference type="ChEBI" id="CHEBI:29035"/>
        <label>3</label>
    </ligand>
</feature>
<feature type="binding site" evidence="1">
    <location>
        <position position="855"/>
    </location>
    <ligand>
        <name>ATP</name>
        <dbReference type="ChEBI" id="CHEBI:30616"/>
        <label>2</label>
    </ligand>
</feature>
<feature type="binding site" evidence="1">
    <location>
        <position position="855"/>
    </location>
    <ligand>
        <name>Mg(2+)</name>
        <dbReference type="ChEBI" id="CHEBI:18420"/>
        <label>3</label>
    </ligand>
</feature>
<feature type="binding site" evidence="1">
    <location>
        <position position="855"/>
    </location>
    <ligand>
        <name>Mg(2+)</name>
        <dbReference type="ChEBI" id="CHEBI:18420"/>
        <label>4</label>
    </ligand>
</feature>
<feature type="binding site" evidence="1">
    <location>
        <position position="855"/>
    </location>
    <ligand>
        <name>Mn(2+)</name>
        <dbReference type="ChEBI" id="CHEBI:29035"/>
        <label>3</label>
    </ligand>
</feature>
<feature type="binding site" evidence="1">
    <location>
        <position position="855"/>
    </location>
    <ligand>
        <name>Mn(2+)</name>
        <dbReference type="ChEBI" id="CHEBI:29035"/>
        <label>4</label>
    </ligand>
</feature>
<feature type="binding site" evidence="1">
    <location>
        <position position="857"/>
    </location>
    <ligand>
        <name>Mg(2+)</name>
        <dbReference type="ChEBI" id="CHEBI:18420"/>
        <label>4</label>
    </ligand>
</feature>
<feature type="binding site" evidence="1">
    <location>
        <position position="857"/>
    </location>
    <ligand>
        <name>Mn(2+)</name>
        <dbReference type="ChEBI" id="CHEBI:29035"/>
        <label>4</label>
    </ligand>
</feature>
<reference key="1">
    <citation type="journal article" date="1998" name="Nature">
        <title>Deciphering the biology of Mycobacterium tuberculosis from the complete genome sequence.</title>
        <authorList>
            <person name="Cole S.T."/>
            <person name="Brosch R."/>
            <person name="Parkhill J."/>
            <person name="Garnier T."/>
            <person name="Churcher C.M."/>
            <person name="Harris D.E."/>
            <person name="Gordon S.V."/>
            <person name="Eiglmeier K."/>
            <person name="Gas S."/>
            <person name="Barry C.E. III"/>
            <person name="Tekaia F."/>
            <person name="Badcock K."/>
            <person name="Basham D."/>
            <person name="Brown D."/>
            <person name="Chillingworth T."/>
            <person name="Connor R."/>
            <person name="Davies R.M."/>
            <person name="Devlin K."/>
            <person name="Feltwell T."/>
            <person name="Gentles S."/>
            <person name="Hamlin N."/>
            <person name="Holroyd S."/>
            <person name="Hornsby T."/>
            <person name="Jagels K."/>
            <person name="Krogh A."/>
            <person name="McLean J."/>
            <person name="Moule S."/>
            <person name="Murphy L.D."/>
            <person name="Oliver S."/>
            <person name="Osborne J."/>
            <person name="Quail M.A."/>
            <person name="Rajandream M.A."/>
            <person name="Rogers J."/>
            <person name="Rutter S."/>
            <person name="Seeger K."/>
            <person name="Skelton S."/>
            <person name="Squares S."/>
            <person name="Squares R."/>
            <person name="Sulston J.E."/>
            <person name="Taylor K."/>
            <person name="Whitehead S."/>
            <person name="Barrell B.G."/>
        </authorList>
    </citation>
    <scope>NUCLEOTIDE SEQUENCE [LARGE SCALE GENOMIC DNA]</scope>
    <source>
        <strain>ATCC 25618 / H37Rv</strain>
    </source>
</reference>
<reference key="2">
    <citation type="journal article" date="2011" name="Mol. Cell. Proteomics">
        <title>Proteogenomic analysis of Mycobacterium tuberculosis by high resolution mass spectrometry.</title>
        <authorList>
            <person name="Kelkar D.S."/>
            <person name="Kumar D."/>
            <person name="Kumar P."/>
            <person name="Balakrishnan L."/>
            <person name="Muthusamy B."/>
            <person name="Yadav A.K."/>
            <person name="Shrivastava P."/>
            <person name="Marimuthu A."/>
            <person name="Anand S."/>
            <person name="Sundaram H."/>
            <person name="Kingsbury R."/>
            <person name="Harsha H.C."/>
            <person name="Nair B."/>
            <person name="Prasad T.S."/>
            <person name="Chauhan D.S."/>
            <person name="Katoch K."/>
            <person name="Katoch V.M."/>
            <person name="Kumar P."/>
            <person name="Chaerkady R."/>
            <person name="Ramachandran S."/>
            <person name="Dash D."/>
            <person name="Pandey A."/>
        </authorList>
    </citation>
    <scope>IDENTIFICATION BY MASS SPECTROMETRY [LARGE SCALE ANALYSIS]</scope>
    <source>
        <strain>ATCC 25618 / H37Rv</strain>
    </source>
</reference>